<proteinExistence type="inferred from homology"/>
<organism>
    <name type="scientific">Escherichia coli O157:H7</name>
    <dbReference type="NCBI Taxonomy" id="83334"/>
    <lineage>
        <taxon>Bacteria</taxon>
        <taxon>Pseudomonadati</taxon>
        <taxon>Pseudomonadota</taxon>
        <taxon>Gammaproteobacteria</taxon>
        <taxon>Enterobacterales</taxon>
        <taxon>Enterobacteriaceae</taxon>
        <taxon>Escherichia</taxon>
    </lineage>
</organism>
<keyword id="KW-0963">Cytoplasm</keyword>
<keyword id="KW-1185">Reference proteome</keyword>
<feature type="chain" id="PRO_0000107798" description="Putative gluconeogenesis factor">
    <location>
        <begin position="1"/>
        <end position="302"/>
    </location>
</feature>
<sequence>MRNRTLADLDRVVALGGGHGLGRVLSSLSSLGSRLTGIVTTTDNGGSTGRIRRSEGGIAWGDMRNCLNQLITEPSVASAMFEYRFGGNGELSGHNLGNLMLKALDHLSVRPLEAINLIRNLLKVDAHLIPMSEHPVDLMAIDDQGHEVYGEVNIDQLTTPIQELLLTPNVPATREAVHAINEADLIIIGPGSFYTSLMPILLLKEIAQALRRTPAPMVYIGNLGRELSLPAANLKLESKLAIMEQYVGKKVIDAVIVGPKVDVSAVKERIVIQEVLEASDIPYRHDRQLLHSALEKALQALG</sequence>
<name>GNGF_ECO57</name>
<reference key="1">
    <citation type="journal article" date="2001" name="Nature">
        <title>Genome sequence of enterohaemorrhagic Escherichia coli O157:H7.</title>
        <authorList>
            <person name="Perna N.T."/>
            <person name="Plunkett G. III"/>
            <person name="Burland V."/>
            <person name="Mau B."/>
            <person name="Glasner J.D."/>
            <person name="Rose D.J."/>
            <person name="Mayhew G.F."/>
            <person name="Evans P.S."/>
            <person name="Gregor J."/>
            <person name="Kirkpatrick H.A."/>
            <person name="Posfai G."/>
            <person name="Hackett J."/>
            <person name="Klink S."/>
            <person name="Boutin A."/>
            <person name="Shao Y."/>
            <person name="Miller L."/>
            <person name="Grotbeck E.J."/>
            <person name="Davis N.W."/>
            <person name="Lim A."/>
            <person name="Dimalanta E.T."/>
            <person name="Potamousis K."/>
            <person name="Apodaca J."/>
            <person name="Anantharaman T.S."/>
            <person name="Lin J."/>
            <person name="Yen G."/>
            <person name="Schwartz D.C."/>
            <person name="Welch R.A."/>
            <person name="Blattner F.R."/>
        </authorList>
    </citation>
    <scope>NUCLEOTIDE SEQUENCE [LARGE SCALE GENOMIC DNA]</scope>
    <source>
        <strain>O157:H7 / EDL933 / ATCC 700927 / EHEC</strain>
    </source>
</reference>
<reference key="2">
    <citation type="journal article" date="2001" name="DNA Res.">
        <title>Complete genome sequence of enterohemorrhagic Escherichia coli O157:H7 and genomic comparison with a laboratory strain K-12.</title>
        <authorList>
            <person name="Hayashi T."/>
            <person name="Makino K."/>
            <person name="Ohnishi M."/>
            <person name="Kurokawa K."/>
            <person name="Ishii K."/>
            <person name="Yokoyama K."/>
            <person name="Han C.-G."/>
            <person name="Ohtsubo E."/>
            <person name="Nakayama K."/>
            <person name="Murata T."/>
            <person name="Tanaka M."/>
            <person name="Tobe T."/>
            <person name="Iida T."/>
            <person name="Takami H."/>
            <person name="Honda T."/>
            <person name="Sasakawa C."/>
            <person name="Ogasawara N."/>
            <person name="Yasunaga T."/>
            <person name="Kuhara S."/>
            <person name="Shiba T."/>
            <person name="Hattori M."/>
            <person name="Shinagawa H."/>
        </authorList>
    </citation>
    <scope>NUCLEOTIDE SEQUENCE [LARGE SCALE GENOMIC DNA]</scope>
    <source>
        <strain>O157:H7 / Sakai / RIMD 0509952 / EHEC</strain>
    </source>
</reference>
<gene>
    <name type="primary">ybhK</name>
    <name type="ordered locus">Z0999</name>
    <name type="ordered locus">ECs0858</name>
</gene>
<comment type="function">
    <text evidence="1">Required for morphogenesis under gluconeogenic growth conditions.</text>
</comment>
<comment type="subcellular location">
    <subcellularLocation>
        <location evidence="1">Cytoplasm</location>
    </subcellularLocation>
</comment>
<comment type="similarity">
    <text evidence="1">Belongs to the gluconeogenesis factor family.</text>
</comment>
<evidence type="ECO:0000255" key="1">
    <source>
        <dbReference type="HAMAP-Rule" id="MF_00973"/>
    </source>
</evidence>
<accession>P58585</accession>
<dbReference type="EMBL" id="AE005174">
    <property type="protein sequence ID" value="AAG55151.1"/>
    <property type="molecule type" value="Genomic_DNA"/>
</dbReference>
<dbReference type="EMBL" id="BA000007">
    <property type="protein sequence ID" value="BAB34281.1"/>
    <property type="molecule type" value="Genomic_DNA"/>
</dbReference>
<dbReference type="PIR" id="B90736">
    <property type="entry name" value="B90736"/>
</dbReference>
<dbReference type="PIR" id="C85586">
    <property type="entry name" value="C85586"/>
</dbReference>
<dbReference type="RefSeq" id="NP_308885.1">
    <property type="nucleotide sequence ID" value="NC_002695.1"/>
</dbReference>
<dbReference type="SMR" id="P58585"/>
<dbReference type="STRING" id="155864.Z0999"/>
<dbReference type="GeneID" id="917602"/>
<dbReference type="KEGG" id="ece:Z0999"/>
<dbReference type="KEGG" id="ecs:ECs_0858"/>
<dbReference type="PATRIC" id="fig|386585.9.peg.972"/>
<dbReference type="eggNOG" id="COG0391">
    <property type="taxonomic scope" value="Bacteria"/>
</dbReference>
<dbReference type="HOGENOM" id="CLU_044041_2_0_6"/>
<dbReference type="OMA" id="LCGDDDW"/>
<dbReference type="Proteomes" id="UP000000558">
    <property type="component" value="Chromosome"/>
</dbReference>
<dbReference type="Proteomes" id="UP000002519">
    <property type="component" value="Chromosome"/>
</dbReference>
<dbReference type="GO" id="GO:0005737">
    <property type="term" value="C:cytoplasm"/>
    <property type="evidence" value="ECO:0007669"/>
    <property type="project" value="UniProtKB-SubCell"/>
</dbReference>
<dbReference type="GO" id="GO:0043743">
    <property type="term" value="F:LPPG:FO 2-phospho-L-lactate transferase activity"/>
    <property type="evidence" value="ECO:0007669"/>
    <property type="project" value="InterPro"/>
</dbReference>
<dbReference type="GO" id="GO:0008360">
    <property type="term" value="P:regulation of cell shape"/>
    <property type="evidence" value="ECO:0007669"/>
    <property type="project" value="UniProtKB-UniRule"/>
</dbReference>
<dbReference type="CDD" id="cd07187">
    <property type="entry name" value="YvcK_like"/>
    <property type="match status" value="1"/>
</dbReference>
<dbReference type="Gene3D" id="3.40.50.10680">
    <property type="entry name" value="CofD-like domains"/>
    <property type="match status" value="1"/>
</dbReference>
<dbReference type="HAMAP" id="MF_00973">
    <property type="entry name" value="Gluconeogen_factor"/>
    <property type="match status" value="1"/>
</dbReference>
<dbReference type="InterPro" id="IPR002882">
    <property type="entry name" value="CofD"/>
</dbReference>
<dbReference type="InterPro" id="IPR038136">
    <property type="entry name" value="CofD-like_dom_sf"/>
</dbReference>
<dbReference type="InterPro" id="IPR010119">
    <property type="entry name" value="Gluconeogen_factor"/>
</dbReference>
<dbReference type="NCBIfam" id="TIGR01826">
    <property type="entry name" value="CofD_related"/>
    <property type="match status" value="1"/>
</dbReference>
<dbReference type="PANTHER" id="PTHR30135:SF3">
    <property type="entry name" value="GLUCONEOGENESIS FACTOR-RELATED"/>
    <property type="match status" value="1"/>
</dbReference>
<dbReference type="PANTHER" id="PTHR30135">
    <property type="entry name" value="UNCHARACTERIZED PROTEIN YVCK-RELATED"/>
    <property type="match status" value="1"/>
</dbReference>
<dbReference type="Pfam" id="PF01933">
    <property type="entry name" value="CofD"/>
    <property type="match status" value="1"/>
</dbReference>
<dbReference type="SUPFAM" id="SSF142338">
    <property type="entry name" value="CofD-like"/>
    <property type="match status" value="1"/>
</dbReference>
<protein>
    <recommendedName>
        <fullName evidence="1">Putative gluconeogenesis factor</fullName>
    </recommendedName>
</protein>